<sequence>MSSYLFTSESVSEGHPDKIADQISDAVLDAILAQDKRARVACETMVKTGVAIVAGEVTTSAWIDLEALTRKVILDIGYNSSDVGFDGETCGVLNLIGKQSPDINQGVDRKNPEQQGAGDQGLMFGYATNETDSYMPAAIHLSHRLVEQQAKIRKKKNSALSWLRPDAKSQVTLRYEDGVATAIDAVVLSTQHDPGVKQKDLIEAVREEILKPVLPAKWLHKGTKFHINPTGKFVIGGPVGDCGLTGRKIIVDTYGGWARHGGGAFSGKDPSKVDRSAAYAARYVAKNVVAAGLADRCEVQVSYAIGVAEPTSISVTTFGTGKIADELIEKLIRKHFDLRPFGIIQMLDLIHPMYQQTASYGHFGRKPKDFTYTDGTGAQHSATSFSWEKTDRAEALRAAAKLK</sequence>
<accession>Q4UR08</accession>
<evidence type="ECO:0000255" key="1">
    <source>
        <dbReference type="HAMAP-Rule" id="MF_00086"/>
    </source>
</evidence>
<proteinExistence type="inferred from homology"/>
<keyword id="KW-0067">ATP-binding</keyword>
<keyword id="KW-0963">Cytoplasm</keyword>
<keyword id="KW-0460">Magnesium</keyword>
<keyword id="KW-0479">Metal-binding</keyword>
<keyword id="KW-0547">Nucleotide-binding</keyword>
<keyword id="KW-0554">One-carbon metabolism</keyword>
<keyword id="KW-0630">Potassium</keyword>
<keyword id="KW-0808">Transferase</keyword>
<comment type="function">
    <text evidence="1">Catalyzes the formation of S-adenosylmethionine (AdoMet) from methionine and ATP. The overall synthetic reaction is composed of two sequential steps, AdoMet formation and the subsequent tripolyphosphate hydrolysis which occurs prior to release of AdoMet from the enzyme.</text>
</comment>
<comment type="catalytic activity">
    <reaction evidence="1">
        <text>L-methionine + ATP + H2O = S-adenosyl-L-methionine + phosphate + diphosphate</text>
        <dbReference type="Rhea" id="RHEA:21080"/>
        <dbReference type="ChEBI" id="CHEBI:15377"/>
        <dbReference type="ChEBI" id="CHEBI:30616"/>
        <dbReference type="ChEBI" id="CHEBI:33019"/>
        <dbReference type="ChEBI" id="CHEBI:43474"/>
        <dbReference type="ChEBI" id="CHEBI:57844"/>
        <dbReference type="ChEBI" id="CHEBI:59789"/>
        <dbReference type="EC" id="2.5.1.6"/>
    </reaction>
</comment>
<comment type="cofactor">
    <cofactor evidence="1">
        <name>Mg(2+)</name>
        <dbReference type="ChEBI" id="CHEBI:18420"/>
    </cofactor>
    <text evidence="1">Binds 2 divalent ions per subunit.</text>
</comment>
<comment type="cofactor">
    <cofactor evidence="1">
        <name>K(+)</name>
        <dbReference type="ChEBI" id="CHEBI:29103"/>
    </cofactor>
    <text evidence="1">Binds 1 potassium ion per subunit.</text>
</comment>
<comment type="pathway">
    <text evidence="1">Amino-acid biosynthesis; S-adenosyl-L-methionine biosynthesis; S-adenosyl-L-methionine from L-methionine: step 1/1.</text>
</comment>
<comment type="subunit">
    <text evidence="1">Homotetramer; dimer of dimers.</text>
</comment>
<comment type="subcellular location">
    <subcellularLocation>
        <location evidence="1">Cytoplasm</location>
    </subcellularLocation>
</comment>
<comment type="similarity">
    <text evidence="1">Belongs to the AdoMet synthase family.</text>
</comment>
<organism>
    <name type="scientific">Xanthomonas campestris pv. campestris (strain 8004)</name>
    <dbReference type="NCBI Taxonomy" id="314565"/>
    <lineage>
        <taxon>Bacteria</taxon>
        <taxon>Pseudomonadati</taxon>
        <taxon>Pseudomonadota</taxon>
        <taxon>Gammaproteobacteria</taxon>
        <taxon>Lysobacterales</taxon>
        <taxon>Lysobacteraceae</taxon>
        <taxon>Xanthomonas</taxon>
    </lineage>
</organism>
<reference key="1">
    <citation type="journal article" date="2005" name="Genome Res.">
        <title>Comparative and functional genomic analyses of the pathogenicity of phytopathogen Xanthomonas campestris pv. campestris.</title>
        <authorList>
            <person name="Qian W."/>
            <person name="Jia Y."/>
            <person name="Ren S.-X."/>
            <person name="He Y.-Q."/>
            <person name="Feng J.-X."/>
            <person name="Lu L.-F."/>
            <person name="Sun Q."/>
            <person name="Ying G."/>
            <person name="Tang D.-J."/>
            <person name="Tang H."/>
            <person name="Wu W."/>
            <person name="Hao P."/>
            <person name="Wang L."/>
            <person name="Jiang B.-L."/>
            <person name="Zeng S."/>
            <person name="Gu W.-Y."/>
            <person name="Lu G."/>
            <person name="Rong L."/>
            <person name="Tian Y."/>
            <person name="Yao Z."/>
            <person name="Fu G."/>
            <person name="Chen B."/>
            <person name="Fang R."/>
            <person name="Qiang B."/>
            <person name="Chen Z."/>
            <person name="Zhao G.-P."/>
            <person name="Tang J.-L."/>
            <person name="He C."/>
        </authorList>
    </citation>
    <scope>NUCLEOTIDE SEQUENCE [LARGE SCALE GENOMIC DNA]</scope>
    <source>
        <strain>8004</strain>
    </source>
</reference>
<gene>
    <name evidence="1" type="primary">metK</name>
    <name type="ordered locus">XC_3471</name>
</gene>
<feature type="chain" id="PRO_0000241058" description="S-adenosylmethionine synthase">
    <location>
        <begin position="1"/>
        <end position="403"/>
    </location>
</feature>
<feature type="region of interest" description="Flexible loop" evidence="1">
    <location>
        <begin position="99"/>
        <end position="109"/>
    </location>
</feature>
<feature type="binding site" description="in other chain" evidence="1">
    <location>
        <position position="15"/>
    </location>
    <ligand>
        <name>ATP</name>
        <dbReference type="ChEBI" id="CHEBI:30616"/>
        <note>ligand shared between two neighboring subunits</note>
    </ligand>
</feature>
<feature type="binding site" evidence="1">
    <location>
        <position position="17"/>
    </location>
    <ligand>
        <name>Mg(2+)</name>
        <dbReference type="ChEBI" id="CHEBI:18420"/>
    </ligand>
</feature>
<feature type="binding site" evidence="1">
    <location>
        <position position="43"/>
    </location>
    <ligand>
        <name>K(+)</name>
        <dbReference type="ChEBI" id="CHEBI:29103"/>
    </ligand>
</feature>
<feature type="binding site" description="in other chain" evidence="1">
    <location>
        <position position="56"/>
    </location>
    <ligand>
        <name>L-methionine</name>
        <dbReference type="ChEBI" id="CHEBI:57844"/>
        <note>ligand shared between two neighboring subunits</note>
    </ligand>
</feature>
<feature type="binding site" description="in other chain" evidence="1">
    <location>
        <position position="99"/>
    </location>
    <ligand>
        <name>L-methionine</name>
        <dbReference type="ChEBI" id="CHEBI:57844"/>
        <note>ligand shared between two neighboring subunits</note>
    </ligand>
</feature>
<feature type="binding site" description="in other chain" evidence="1">
    <location>
        <begin position="166"/>
        <end position="168"/>
    </location>
    <ligand>
        <name>ATP</name>
        <dbReference type="ChEBI" id="CHEBI:30616"/>
        <note>ligand shared between two neighboring subunits</note>
    </ligand>
</feature>
<feature type="binding site" description="in other chain" evidence="1">
    <location>
        <begin position="232"/>
        <end position="233"/>
    </location>
    <ligand>
        <name>ATP</name>
        <dbReference type="ChEBI" id="CHEBI:30616"/>
        <note>ligand shared between two neighboring subunits</note>
    </ligand>
</feature>
<feature type="binding site" evidence="1">
    <location>
        <position position="241"/>
    </location>
    <ligand>
        <name>ATP</name>
        <dbReference type="ChEBI" id="CHEBI:30616"/>
        <note>ligand shared between two neighboring subunits</note>
    </ligand>
</feature>
<feature type="binding site" evidence="1">
    <location>
        <position position="241"/>
    </location>
    <ligand>
        <name>L-methionine</name>
        <dbReference type="ChEBI" id="CHEBI:57844"/>
        <note>ligand shared between two neighboring subunits</note>
    </ligand>
</feature>
<feature type="binding site" description="in other chain" evidence="1">
    <location>
        <begin position="247"/>
        <end position="248"/>
    </location>
    <ligand>
        <name>ATP</name>
        <dbReference type="ChEBI" id="CHEBI:30616"/>
        <note>ligand shared between two neighboring subunits</note>
    </ligand>
</feature>
<feature type="binding site" evidence="1">
    <location>
        <position position="264"/>
    </location>
    <ligand>
        <name>ATP</name>
        <dbReference type="ChEBI" id="CHEBI:30616"/>
        <note>ligand shared between two neighboring subunits</note>
    </ligand>
</feature>
<feature type="binding site" evidence="1">
    <location>
        <position position="268"/>
    </location>
    <ligand>
        <name>ATP</name>
        <dbReference type="ChEBI" id="CHEBI:30616"/>
        <note>ligand shared between two neighboring subunits</note>
    </ligand>
</feature>
<feature type="binding site" description="in other chain" evidence="1">
    <location>
        <position position="272"/>
    </location>
    <ligand>
        <name>L-methionine</name>
        <dbReference type="ChEBI" id="CHEBI:57844"/>
        <note>ligand shared between two neighboring subunits</note>
    </ligand>
</feature>
<name>METK_XANC8</name>
<dbReference type="EC" id="2.5.1.6" evidence="1"/>
<dbReference type="EMBL" id="CP000050">
    <property type="protein sequence ID" value="AAY50515.1"/>
    <property type="molecule type" value="Genomic_DNA"/>
</dbReference>
<dbReference type="RefSeq" id="WP_011269998.1">
    <property type="nucleotide sequence ID" value="NZ_CP155948.1"/>
</dbReference>
<dbReference type="SMR" id="Q4UR08"/>
<dbReference type="GeneID" id="58014665"/>
<dbReference type="KEGG" id="xcb:XC_3471"/>
<dbReference type="HOGENOM" id="CLU_041802_1_1_6"/>
<dbReference type="UniPathway" id="UPA00315">
    <property type="reaction ID" value="UER00080"/>
</dbReference>
<dbReference type="Proteomes" id="UP000000420">
    <property type="component" value="Chromosome"/>
</dbReference>
<dbReference type="GO" id="GO:0005737">
    <property type="term" value="C:cytoplasm"/>
    <property type="evidence" value="ECO:0007669"/>
    <property type="project" value="UniProtKB-SubCell"/>
</dbReference>
<dbReference type="GO" id="GO:0005524">
    <property type="term" value="F:ATP binding"/>
    <property type="evidence" value="ECO:0007669"/>
    <property type="project" value="UniProtKB-UniRule"/>
</dbReference>
<dbReference type="GO" id="GO:0000287">
    <property type="term" value="F:magnesium ion binding"/>
    <property type="evidence" value="ECO:0007669"/>
    <property type="project" value="UniProtKB-UniRule"/>
</dbReference>
<dbReference type="GO" id="GO:0004478">
    <property type="term" value="F:methionine adenosyltransferase activity"/>
    <property type="evidence" value="ECO:0007669"/>
    <property type="project" value="UniProtKB-UniRule"/>
</dbReference>
<dbReference type="GO" id="GO:0006730">
    <property type="term" value="P:one-carbon metabolic process"/>
    <property type="evidence" value="ECO:0007669"/>
    <property type="project" value="UniProtKB-KW"/>
</dbReference>
<dbReference type="GO" id="GO:0006556">
    <property type="term" value="P:S-adenosylmethionine biosynthetic process"/>
    <property type="evidence" value="ECO:0007669"/>
    <property type="project" value="UniProtKB-UniRule"/>
</dbReference>
<dbReference type="CDD" id="cd18079">
    <property type="entry name" value="S-AdoMet_synt"/>
    <property type="match status" value="1"/>
</dbReference>
<dbReference type="FunFam" id="3.30.300.10:FF:000003">
    <property type="entry name" value="S-adenosylmethionine synthase"/>
    <property type="match status" value="1"/>
</dbReference>
<dbReference type="FunFam" id="3.30.300.10:FF:000004">
    <property type="entry name" value="S-adenosylmethionine synthase"/>
    <property type="match status" value="1"/>
</dbReference>
<dbReference type="Gene3D" id="3.30.300.10">
    <property type="match status" value="3"/>
</dbReference>
<dbReference type="HAMAP" id="MF_00086">
    <property type="entry name" value="S_AdoMet_synth1"/>
    <property type="match status" value="1"/>
</dbReference>
<dbReference type="InterPro" id="IPR022631">
    <property type="entry name" value="ADOMET_SYNTHASE_CS"/>
</dbReference>
<dbReference type="InterPro" id="IPR022630">
    <property type="entry name" value="S-AdoMet_synt_C"/>
</dbReference>
<dbReference type="InterPro" id="IPR022629">
    <property type="entry name" value="S-AdoMet_synt_central"/>
</dbReference>
<dbReference type="InterPro" id="IPR022628">
    <property type="entry name" value="S-AdoMet_synt_N"/>
</dbReference>
<dbReference type="InterPro" id="IPR002133">
    <property type="entry name" value="S-AdoMet_synthetase"/>
</dbReference>
<dbReference type="InterPro" id="IPR022636">
    <property type="entry name" value="S-AdoMet_synthetase_sfam"/>
</dbReference>
<dbReference type="NCBIfam" id="TIGR01034">
    <property type="entry name" value="metK"/>
    <property type="match status" value="1"/>
</dbReference>
<dbReference type="PANTHER" id="PTHR11964">
    <property type="entry name" value="S-ADENOSYLMETHIONINE SYNTHETASE"/>
    <property type="match status" value="1"/>
</dbReference>
<dbReference type="Pfam" id="PF02773">
    <property type="entry name" value="S-AdoMet_synt_C"/>
    <property type="match status" value="1"/>
</dbReference>
<dbReference type="Pfam" id="PF02772">
    <property type="entry name" value="S-AdoMet_synt_M"/>
    <property type="match status" value="1"/>
</dbReference>
<dbReference type="Pfam" id="PF00438">
    <property type="entry name" value="S-AdoMet_synt_N"/>
    <property type="match status" value="1"/>
</dbReference>
<dbReference type="PIRSF" id="PIRSF000497">
    <property type="entry name" value="MAT"/>
    <property type="match status" value="1"/>
</dbReference>
<dbReference type="SUPFAM" id="SSF55973">
    <property type="entry name" value="S-adenosylmethionine synthetase"/>
    <property type="match status" value="3"/>
</dbReference>
<dbReference type="PROSITE" id="PS00376">
    <property type="entry name" value="ADOMET_SYNTHASE_1"/>
    <property type="match status" value="1"/>
</dbReference>
<dbReference type="PROSITE" id="PS00377">
    <property type="entry name" value="ADOMET_SYNTHASE_2"/>
    <property type="match status" value="1"/>
</dbReference>
<protein>
    <recommendedName>
        <fullName evidence="1">S-adenosylmethionine synthase</fullName>
        <shortName evidence="1">AdoMet synthase</shortName>
        <ecNumber evidence="1">2.5.1.6</ecNumber>
    </recommendedName>
    <alternativeName>
        <fullName evidence="1">MAT</fullName>
    </alternativeName>
    <alternativeName>
        <fullName evidence="1">Methionine adenosyltransferase</fullName>
    </alternativeName>
</protein>